<evidence type="ECO:0000255" key="1"/>
<evidence type="ECO:0000269" key="2">
    <source>
    </source>
</evidence>
<evidence type="ECO:0000269" key="3">
    <source>
    </source>
</evidence>
<evidence type="ECO:0000305" key="4"/>
<evidence type="ECO:0007744" key="5">
    <source>
    </source>
</evidence>
<name>GOT1B_HUMAN</name>
<organism>
    <name type="scientific">Homo sapiens</name>
    <name type="common">Human</name>
    <dbReference type="NCBI Taxonomy" id="9606"/>
    <lineage>
        <taxon>Eukaryota</taxon>
        <taxon>Metazoa</taxon>
        <taxon>Chordata</taxon>
        <taxon>Craniata</taxon>
        <taxon>Vertebrata</taxon>
        <taxon>Euteleostomi</taxon>
        <taxon>Mammalia</taxon>
        <taxon>Eutheria</taxon>
        <taxon>Euarchontoglires</taxon>
        <taxon>Primates</taxon>
        <taxon>Haplorrhini</taxon>
        <taxon>Catarrhini</taxon>
        <taxon>Hominidae</taxon>
        <taxon>Homo</taxon>
    </lineage>
</organism>
<protein>
    <recommendedName>
        <fullName>Vesicle transport protein GOT1B</fullName>
    </recommendedName>
    <alternativeName>
        <fullName>Germ cell tumor 2</fullName>
    </alternativeName>
    <alternativeName>
        <fullName>Golgi transport 1 homolog B</fullName>
    </alternativeName>
    <alternativeName>
        <fullName>Putative NF-kappa-B-activating protein 470</fullName>
    </alternativeName>
    <alternativeName>
        <fullName>hGOT1a</fullName>
    </alternativeName>
</protein>
<comment type="function">
    <text>May be involved in fusion of ER-derived transport vesicles with the Golgi complex.</text>
</comment>
<comment type="interaction">
    <interactant intactId="EBI-4402607">
        <id>Q9Y3E0</id>
    </interactant>
    <interactant intactId="EBI-6942903">
        <id>Q96BA8</id>
        <label>CREB3L1</label>
    </interactant>
    <organismsDiffer>false</organismsDiffer>
    <experiments>3</experiments>
</comment>
<comment type="interaction">
    <interactant intactId="EBI-4402607">
        <id>Q9Y3E0</id>
    </interactant>
    <interactant intactId="EBI-13345167">
        <id>Q8TDT2</id>
        <label>GPR152</label>
    </interactant>
    <organismsDiffer>false</organismsDiffer>
    <experiments>3</experiments>
</comment>
<comment type="interaction">
    <interactant intactId="EBI-4402607">
        <id>Q9Y3E0</id>
    </interactant>
    <interactant intactId="EBI-749162">
        <id>Q9BT40</id>
        <label>INPP5K</label>
    </interactant>
    <organismsDiffer>false</organismsDiffer>
    <experiments>3</experiments>
</comment>
<comment type="interaction">
    <interactant intactId="EBI-4402607">
        <id>Q9Y3E0</id>
    </interactant>
    <interactant intactId="EBI-17263240">
        <id>P15941-11</id>
        <label>MUC1</label>
    </interactant>
    <organismsDiffer>false</organismsDiffer>
    <experiments>3</experiments>
</comment>
<comment type="interaction">
    <interactant intactId="EBI-4402607">
        <id>Q9Y3E0</id>
    </interactant>
    <interactant intactId="EBI-3920694">
        <id>Q9NR31</id>
        <label>SAR1A</label>
    </interactant>
    <organismsDiffer>false</organismsDiffer>
    <experiments>3</experiments>
</comment>
<comment type="interaction">
    <interactant intactId="EBI-4402607">
        <id>Q9Y3E0</id>
    </interactant>
    <interactant intactId="EBI-727004">
        <id>O00560</id>
        <label>SDCBP</label>
    </interactant>
    <organismsDiffer>false</organismsDiffer>
    <experiments>3</experiments>
</comment>
<comment type="interaction">
    <interactant intactId="EBI-4402607">
        <id>Q9Y3E0</id>
    </interactant>
    <interactant intactId="EBI-6503765">
        <id>Q8IVP1</id>
        <label>SH3GL3</label>
    </interactant>
    <organismsDiffer>false</organismsDiffer>
    <experiments>3</experiments>
</comment>
<comment type="interaction">
    <interactant intactId="EBI-4402607">
        <id>Q9Y3E0</id>
    </interactant>
    <interactant intactId="EBI-18396772">
        <id>Q6UWV7</id>
        <label>SHISAL2A</label>
    </interactant>
    <organismsDiffer>false</organismsDiffer>
    <experiments>3</experiments>
</comment>
<comment type="interaction">
    <interactant intactId="EBI-4402607">
        <id>Q9Y3E0</id>
    </interactant>
    <interactant intactId="EBI-18159983">
        <id>Q3KNW5</id>
        <label>SLC10A6</label>
    </interactant>
    <organismsDiffer>false</organismsDiffer>
    <experiments>3</experiments>
</comment>
<comment type="interaction">
    <interactant intactId="EBI-4402607">
        <id>Q9Y3E0</id>
    </interactant>
    <interactant intactId="EBI-742688">
        <id>Q9NZD8</id>
        <label>SPG21</label>
    </interactant>
    <organismsDiffer>false</organismsDiffer>
    <experiments>3</experiments>
</comment>
<comment type="subcellular location">
    <subcellularLocation>
        <location evidence="2">Golgi apparatus membrane</location>
        <topology evidence="2">Multi-pass membrane protein</topology>
    </subcellularLocation>
</comment>
<comment type="tissue specificity">
    <text evidence="3">Widely expressed. Tends to be up-regulated in seminomas compared to normal testis.</text>
</comment>
<comment type="similarity">
    <text evidence="4">Belongs to the GOT1 family.</text>
</comment>
<comment type="sequence caution" evidence="4">
    <conflict type="erroneous initiation">
        <sequence resource="EMBL-CDS" id="AAF65181"/>
    </conflict>
    <text>Extended N-terminus.</text>
</comment>
<sequence>MISLTDTQKIGMGLTGFGVFFLFFGMILFFDKALLAIGNVLFVAGLAFVIGLERTFRFFFQKHKMKATGFFLGGVFVVLIGWPLIGMIFEIYGFFLLFRGFFPVVVGFIRRVPVLGSLLNLPGIRSFVDKVGESNNMV</sequence>
<proteinExistence type="evidence at protein level"/>
<accession>Q9Y3E0</accession>
<accession>B2R4R4</accession>
<accession>Q54A40</accession>
<accession>Q6I9W6</accession>
<accession>Q9P1R9</accession>
<dbReference type="EMBL" id="AF151899">
    <property type="protein sequence ID" value="AAD34136.1"/>
    <property type="molecule type" value="mRNA"/>
</dbReference>
<dbReference type="EMBL" id="AL136571">
    <property type="protein sequence ID" value="CAB66506.1"/>
    <property type="molecule type" value="mRNA"/>
</dbReference>
<dbReference type="EMBL" id="AB097020">
    <property type="protein sequence ID" value="BAC77373.1"/>
    <property type="molecule type" value="mRNA"/>
</dbReference>
<dbReference type="EMBL" id="AY358975">
    <property type="protein sequence ID" value="AAQ89334.1"/>
    <property type="molecule type" value="mRNA"/>
</dbReference>
<dbReference type="EMBL" id="AF068292">
    <property type="protein sequence ID" value="AAF65181.1"/>
    <property type="status" value="ALT_INIT"/>
    <property type="molecule type" value="mRNA"/>
</dbReference>
<dbReference type="EMBL" id="CR457389">
    <property type="protein sequence ID" value="CAG33670.1"/>
    <property type="molecule type" value="mRNA"/>
</dbReference>
<dbReference type="EMBL" id="AK311920">
    <property type="protein sequence ID" value="BAG34861.1"/>
    <property type="molecule type" value="mRNA"/>
</dbReference>
<dbReference type="EMBL" id="CH471094">
    <property type="protein sequence ID" value="EAW96443.1"/>
    <property type="molecule type" value="Genomic_DNA"/>
</dbReference>
<dbReference type="EMBL" id="BC012455">
    <property type="protein sequence ID" value="AAH12455.1"/>
    <property type="molecule type" value="mRNA"/>
</dbReference>
<dbReference type="CCDS" id="CCDS8689.1"/>
<dbReference type="PIR" id="T46908">
    <property type="entry name" value="T46908"/>
</dbReference>
<dbReference type="RefSeq" id="NP_057156.1">
    <property type="nucleotide sequence ID" value="NM_016072.5"/>
</dbReference>
<dbReference type="BioGRID" id="119232">
    <property type="interactions" value="246"/>
</dbReference>
<dbReference type="FunCoup" id="Q9Y3E0">
    <property type="interactions" value="2003"/>
</dbReference>
<dbReference type="IntAct" id="Q9Y3E0">
    <property type="interactions" value="211"/>
</dbReference>
<dbReference type="MINT" id="Q9Y3E0"/>
<dbReference type="STRING" id="9606.ENSP00000229314"/>
<dbReference type="iPTMnet" id="Q9Y3E0"/>
<dbReference type="MetOSite" id="Q9Y3E0"/>
<dbReference type="PhosphoSitePlus" id="Q9Y3E0"/>
<dbReference type="SwissPalm" id="Q9Y3E0"/>
<dbReference type="BioMuta" id="GOLT1B"/>
<dbReference type="DMDM" id="20534680"/>
<dbReference type="jPOST" id="Q9Y3E0"/>
<dbReference type="MassIVE" id="Q9Y3E0"/>
<dbReference type="PaxDb" id="9606-ENSP00000229314"/>
<dbReference type="PeptideAtlas" id="Q9Y3E0"/>
<dbReference type="ProteomicsDB" id="86027"/>
<dbReference type="Pumba" id="Q9Y3E0"/>
<dbReference type="TopDownProteomics" id="Q9Y3E0"/>
<dbReference type="Antibodypedia" id="67178">
    <property type="antibodies" value="59 antibodies from 16 providers"/>
</dbReference>
<dbReference type="DNASU" id="51026"/>
<dbReference type="Ensembl" id="ENST00000229314.10">
    <property type="protein sequence ID" value="ENSP00000229314.4"/>
    <property type="gene ID" value="ENSG00000111711.10"/>
</dbReference>
<dbReference type="GeneID" id="51026"/>
<dbReference type="KEGG" id="hsa:51026"/>
<dbReference type="MANE-Select" id="ENST00000229314.10">
    <property type="protein sequence ID" value="ENSP00000229314.4"/>
    <property type="RefSeq nucleotide sequence ID" value="NM_016072.5"/>
    <property type="RefSeq protein sequence ID" value="NP_057156.1"/>
</dbReference>
<dbReference type="UCSC" id="uc001rez.3">
    <property type="organism name" value="human"/>
</dbReference>
<dbReference type="AGR" id="HGNC:20175"/>
<dbReference type="CTD" id="51026"/>
<dbReference type="DisGeNET" id="51026"/>
<dbReference type="GeneCards" id="GOLT1B"/>
<dbReference type="HGNC" id="HGNC:20175">
    <property type="gene designation" value="GOLT1B"/>
</dbReference>
<dbReference type="HPA" id="ENSG00000111711">
    <property type="expression patterns" value="Low tissue specificity"/>
</dbReference>
<dbReference type="MIM" id="615078">
    <property type="type" value="gene"/>
</dbReference>
<dbReference type="neXtProt" id="NX_Q9Y3E0"/>
<dbReference type="OpenTargets" id="ENSG00000111711"/>
<dbReference type="PharmGKB" id="PA134898810"/>
<dbReference type="VEuPathDB" id="HostDB:ENSG00000111711"/>
<dbReference type="eggNOG" id="KOG1743">
    <property type="taxonomic scope" value="Eukaryota"/>
</dbReference>
<dbReference type="GeneTree" id="ENSGT00390000014507"/>
<dbReference type="InParanoid" id="Q9Y3E0"/>
<dbReference type="OMA" id="MWLTDAQ"/>
<dbReference type="OrthoDB" id="204784at2759"/>
<dbReference type="PAN-GO" id="Q9Y3E0">
    <property type="GO annotations" value="2 GO annotations based on evolutionary models"/>
</dbReference>
<dbReference type="PhylomeDB" id="Q9Y3E0"/>
<dbReference type="TreeFam" id="TF300267"/>
<dbReference type="PathwayCommons" id="Q9Y3E0"/>
<dbReference type="SignaLink" id="Q9Y3E0"/>
<dbReference type="BioGRID-ORCS" id="51026">
    <property type="hits" value="150 hits in 1130 CRISPR screens"/>
</dbReference>
<dbReference type="ChiTaRS" id="GOLT1B">
    <property type="organism name" value="human"/>
</dbReference>
<dbReference type="GeneWiki" id="GOLT1B"/>
<dbReference type="GenomeRNAi" id="51026"/>
<dbReference type="Pharos" id="Q9Y3E0">
    <property type="development level" value="Tbio"/>
</dbReference>
<dbReference type="PRO" id="PR:Q9Y3E0"/>
<dbReference type="Proteomes" id="UP000005640">
    <property type="component" value="Chromosome 12"/>
</dbReference>
<dbReference type="RNAct" id="Q9Y3E0">
    <property type="molecule type" value="protein"/>
</dbReference>
<dbReference type="Bgee" id="ENSG00000111711">
    <property type="expression patterns" value="Expressed in secondary oocyte and 202 other cell types or tissues"/>
</dbReference>
<dbReference type="ExpressionAtlas" id="Q9Y3E0">
    <property type="expression patterns" value="baseline and differential"/>
</dbReference>
<dbReference type="GO" id="GO:0005829">
    <property type="term" value="C:cytosol"/>
    <property type="evidence" value="ECO:0007669"/>
    <property type="project" value="GOC"/>
</dbReference>
<dbReference type="GO" id="GO:0005783">
    <property type="term" value="C:endoplasmic reticulum"/>
    <property type="evidence" value="ECO:0000314"/>
    <property type="project" value="LIFEdb"/>
</dbReference>
<dbReference type="GO" id="GO:0000139">
    <property type="term" value="C:Golgi membrane"/>
    <property type="evidence" value="ECO:0007669"/>
    <property type="project" value="UniProtKB-SubCell"/>
</dbReference>
<dbReference type="GO" id="GO:0016020">
    <property type="term" value="C:membrane"/>
    <property type="evidence" value="ECO:0007005"/>
    <property type="project" value="UniProtKB"/>
</dbReference>
<dbReference type="GO" id="GO:0032991">
    <property type="term" value="C:protein-containing complex"/>
    <property type="evidence" value="ECO:0000314"/>
    <property type="project" value="MGI"/>
</dbReference>
<dbReference type="GO" id="GO:0006888">
    <property type="term" value="P:endoplasmic reticulum to Golgi vesicle-mediated transport"/>
    <property type="evidence" value="ECO:0007669"/>
    <property type="project" value="InterPro"/>
</dbReference>
<dbReference type="GO" id="GO:0043123">
    <property type="term" value="P:positive regulation of canonical NF-kappaB signal transduction"/>
    <property type="evidence" value="ECO:0007001"/>
    <property type="project" value="UniProtKB"/>
</dbReference>
<dbReference type="GO" id="GO:0015031">
    <property type="term" value="P:protein transport"/>
    <property type="evidence" value="ECO:0007669"/>
    <property type="project" value="UniProtKB-KW"/>
</dbReference>
<dbReference type="GO" id="GO:0042147">
    <property type="term" value="P:retrograde transport, endosome to Golgi"/>
    <property type="evidence" value="ECO:0007669"/>
    <property type="project" value="InterPro"/>
</dbReference>
<dbReference type="InterPro" id="IPR045176">
    <property type="entry name" value="Got1"/>
</dbReference>
<dbReference type="InterPro" id="IPR007305">
    <property type="entry name" value="Vesicle_transpt_Got1/SFT2"/>
</dbReference>
<dbReference type="PANTHER" id="PTHR21493">
    <property type="entry name" value="CGI-141-RELATED/LIPASE CONTAINING PROTEIN"/>
    <property type="match status" value="1"/>
</dbReference>
<dbReference type="PANTHER" id="PTHR21493:SF79">
    <property type="entry name" value="VESICLE TRANSPORT PROTEIN GOT1B"/>
    <property type="match status" value="1"/>
</dbReference>
<dbReference type="Pfam" id="PF04178">
    <property type="entry name" value="Got1"/>
    <property type="match status" value="1"/>
</dbReference>
<reference key="1">
    <citation type="journal article" date="2000" name="Genome Res.">
        <title>Identification of novel human genes evolutionarily conserved in Caenorhabditis elegans by comparative proteomics.</title>
        <authorList>
            <person name="Lai C.-H."/>
            <person name="Chou C.-Y."/>
            <person name="Ch'ang L.-Y."/>
            <person name="Liu C.-S."/>
            <person name="Lin W.-C."/>
        </authorList>
    </citation>
    <scope>NUCLEOTIDE SEQUENCE [LARGE SCALE MRNA]</scope>
</reference>
<reference key="2">
    <citation type="journal article" date="2001" name="Genome Res.">
        <title>Towards a catalog of human genes and proteins: sequencing and analysis of 500 novel complete protein coding human cDNAs.</title>
        <authorList>
            <person name="Wiemann S."/>
            <person name="Weil B."/>
            <person name="Wellenreuther R."/>
            <person name="Gassenhuber J."/>
            <person name="Glassl S."/>
            <person name="Ansorge W."/>
            <person name="Boecher M."/>
            <person name="Bloecker H."/>
            <person name="Bauersachs S."/>
            <person name="Blum H."/>
            <person name="Lauber J."/>
            <person name="Duesterhoeft A."/>
            <person name="Beyer A."/>
            <person name="Koehrer K."/>
            <person name="Strack N."/>
            <person name="Mewes H.-W."/>
            <person name="Ottenwaelder B."/>
            <person name="Obermaier B."/>
            <person name="Tampe J."/>
            <person name="Heubner D."/>
            <person name="Wambutt R."/>
            <person name="Korn B."/>
            <person name="Klein M."/>
            <person name="Poustka A."/>
        </authorList>
    </citation>
    <scope>NUCLEOTIDE SEQUENCE [LARGE SCALE MRNA]</scope>
    <source>
        <tissue>Amygdala</tissue>
    </source>
</reference>
<reference key="3">
    <citation type="journal article" date="2003" name="Oncogene">
        <title>Large-scale identification and characterization of human genes that activate NF-kappaB and MAPK signaling pathways.</title>
        <authorList>
            <person name="Matsuda A."/>
            <person name="Suzuki Y."/>
            <person name="Honda G."/>
            <person name="Muramatsu S."/>
            <person name="Matsuzaki O."/>
            <person name="Nagano Y."/>
            <person name="Doi T."/>
            <person name="Shimotohno K."/>
            <person name="Harada T."/>
            <person name="Nishida E."/>
            <person name="Hayashi H."/>
            <person name="Sugano S."/>
        </authorList>
    </citation>
    <scope>NUCLEOTIDE SEQUENCE [LARGE SCALE MRNA]</scope>
    <source>
        <tissue>Lung fibroblast</tissue>
    </source>
</reference>
<reference key="4">
    <citation type="journal article" date="2003" name="Genome Res.">
        <title>The secreted protein discovery initiative (SPDI), a large-scale effort to identify novel human secreted and transmembrane proteins: a bioinformatics assessment.</title>
        <authorList>
            <person name="Clark H.F."/>
            <person name="Gurney A.L."/>
            <person name="Abaya E."/>
            <person name="Baker K."/>
            <person name="Baldwin D.T."/>
            <person name="Brush J."/>
            <person name="Chen J."/>
            <person name="Chow B."/>
            <person name="Chui C."/>
            <person name="Crowley C."/>
            <person name="Currell B."/>
            <person name="Deuel B."/>
            <person name="Dowd P."/>
            <person name="Eaton D."/>
            <person name="Foster J.S."/>
            <person name="Grimaldi C."/>
            <person name="Gu Q."/>
            <person name="Hass P.E."/>
            <person name="Heldens S."/>
            <person name="Huang A."/>
            <person name="Kim H.S."/>
            <person name="Klimowski L."/>
            <person name="Jin Y."/>
            <person name="Johnson S."/>
            <person name="Lee J."/>
            <person name="Lewis L."/>
            <person name="Liao D."/>
            <person name="Mark M.R."/>
            <person name="Robbie E."/>
            <person name="Sanchez C."/>
            <person name="Schoenfeld J."/>
            <person name="Seshagiri S."/>
            <person name="Simmons L."/>
            <person name="Singh J."/>
            <person name="Smith V."/>
            <person name="Stinson J."/>
            <person name="Vagts A."/>
            <person name="Vandlen R.L."/>
            <person name="Watanabe C."/>
            <person name="Wieand D."/>
            <person name="Woods K."/>
            <person name="Xie M.-H."/>
            <person name="Yansura D.G."/>
            <person name="Yi S."/>
            <person name="Yu G."/>
            <person name="Yuan J."/>
            <person name="Zhang M."/>
            <person name="Zhang Z."/>
            <person name="Goddard A.D."/>
            <person name="Wood W.I."/>
            <person name="Godowski P.J."/>
            <person name="Gray A.M."/>
        </authorList>
    </citation>
    <scope>NUCLEOTIDE SEQUENCE [LARGE SCALE MRNA]</scope>
</reference>
<reference key="5">
    <citation type="submission" date="1998-05" db="EMBL/GenBank/DDBJ databases">
        <title>A novel gene from human dendritic cell.</title>
        <authorList>
            <person name="Zhao Z."/>
            <person name="Huang X."/>
            <person name="Li N."/>
            <person name="Zhu X."/>
            <person name="Cao X."/>
        </authorList>
    </citation>
    <scope>NUCLEOTIDE SEQUENCE [LARGE SCALE MRNA]</scope>
    <source>
        <tissue>Dendritic cell</tissue>
    </source>
</reference>
<reference key="6">
    <citation type="submission" date="2004-06" db="EMBL/GenBank/DDBJ databases">
        <title>Cloning of human full open reading frames in Gateway(TM) system entry vector (pDONR201).</title>
        <authorList>
            <person name="Ebert L."/>
            <person name="Schick M."/>
            <person name="Neubert P."/>
            <person name="Schatten R."/>
            <person name="Henze S."/>
            <person name="Korn B."/>
        </authorList>
    </citation>
    <scope>NUCLEOTIDE SEQUENCE [LARGE SCALE MRNA]</scope>
</reference>
<reference key="7">
    <citation type="journal article" date="2004" name="Nat. Genet.">
        <title>Complete sequencing and characterization of 21,243 full-length human cDNAs.</title>
        <authorList>
            <person name="Ota T."/>
            <person name="Suzuki Y."/>
            <person name="Nishikawa T."/>
            <person name="Otsuki T."/>
            <person name="Sugiyama T."/>
            <person name="Irie R."/>
            <person name="Wakamatsu A."/>
            <person name="Hayashi K."/>
            <person name="Sato H."/>
            <person name="Nagai K."/>
            <person name="Kimura K."/>
            <person name="Makita H."/>
            <person name="Sekine M."/>
            <person name="Obayashi M."/>
            <person name="Nishi T."/>
            <person name="Shibahara T."/>
            <person name="Tanaka T."/>
            <person name="Ishii S."/>
            <person name="Yamamoto J."/>
            <person name="Saito K."/>
            <person name="Kawai Y."/>
            <person name="Isono Y."/>
            <person name="Nakamura Y."/>
            <person name="Nagahari K."/>
            <person name="Murakami K."/>
            <person name="Yasuda T."/>
            <person name="Iwayanagi T."/>
            <person name="Wagatsuma M."/>
            <person name="Shiratori A."/>
            <person name="Sudo H."/>
            <person name="Hosoiri T."/>
            <person name="Kaku Y."/>
            <person name="Kodaira H."/>
            <person name="Kondo H."/>
            <person name="Sugawara M."/>
            <person name="Takahashi M."/>
            <person name="Kanda K."/>
            <person name="Yokoi T."/>
            <person name="Furuya T."/>
            <person name="Kikkawa E."/>
            <person name="Omura Y."/>
            <person name="Abe K."/>
            <person name="Kamihara K."/>
            <person name="Katsuta N."/>
            <person name="Sato K."/>
            <person name="Tanikawa M."/>
            <person name="Yamazaki M."/>
            <person name="Ninomiya K."/>
            <person name="Ishibashi T."/>
            <person name="Yamashita H."/>
            <person name="Murakawa K."/>
            <person name="Fujimori K."/>
            <person name="Tanai H."/>
            <person name="Kimata M."/>
            <person name="Watanabe M."/>
            <person name="Hiraoka S."/>
            <person name="Chiba Y."/>
            <person name="Ishida S."/>
            <person name="Ono Y."/>
            <person name="Takiguchi S."/>
            <person name="Watanabe S."/>
            <person name="Yosida M."/>
            <person name="Hotuta T."/>
            <person name="Kusano J."/>
            <person name="Kanehori K."/>
            <person name="Takahashi-Fujii A."/>
            <person name="Hara H."/>
            <person name="Tanase T.-O."/>
            <person name="Nomura Y."/>
            <person name="Togiya S."/>
            <person name="Komai F."/>
            <person name="Hara R."/>
            <person name="Takeuchi K."/>
            <person name="Arita M."/>
            <person name="Imose N."/>
            <person name="Musashino K."/>
            <person name="Yuuki H."/>
            <person name="Oshima A."/>
            <person name="Sasaki N."/>
            <person name="Aotsuka S."/>
            <person name="Yoshikawa Y."/>
            <person name="Matsunawa H."/>
            <person name="Ichihara T."/>
            <person name="Shiohata N."/>
            <person name="Sano S."/>
            <person name="Moriya S."/>
            <person name="Momiyama H."/>
            <person name="Satoh N."/>
            <person name="Takami S."/>
            <person name="Terashima Y."/>
            <person name="Suzuki O."/>
            <person name="Nakagawa S."/>
            <person name="Senoh A."/>
            <person name="Mizoguchi H."/>
            <person name="Goto Y."/>
            <person name="Shimizu F."/>
            <person name="Wakebe H."/>
            <person name="Hishigaki H."/>
            <person name="Watanabe T."/>
            <person name="Sugiyama A."/>
            <person name="Takemoto M."/>
            <person name="Kawakami B."/>
            <person name="Yamazaki M."/>
            <person name="Watanabe K."/>
            <person name="Kumagai A."/>
            <person name="Itakura S."/>
            <person name="Fukuzumi Y."/>
            <person name="Fujimori Y."/>
            <person name="Komiyama M."/>
            <person name="Tashiro H."/>
            <person name="Tanigami A."/>
            <person name="Fujiwara T."/>
            <person name="Ono T."/>
            <person name="Yamada K."/>
            <person name="Fujii Y."/>
            <person name="Ozaki K."/>
            <person name="Hirao M."/>
            <person name="Ohmori Y."/>
            <person name="Kawabata A."/>
            <person name="Hikiji T."/>
            <person name="Kobatake N."/>
            <person name="Inagaki H."/>
            <person name="Ikema Y."/>
            <person name="Okamoto S."/>
            <person name="Okitani R."/>
            <person name="Kawakami T."/>
            <person name="Noguchi S."/>
            <person name="Itoh T."/>
            <person name="Shigeta K."/>
            <person name="Senba T."/>
            <person name="Matsumura K."/>
            <person name="Nakajima Y."/>
            <person name="Mizuno T."/>
            <person name="Morinaga M."/>
            <person name="Sasaki M."/>
            <person name="Togashi T."/>
            <person name="Oyama M."/>
            <person name="Hata H."/>
            <person name="Watanabe M."/>
            <person name="Komatsu T."/>
            <person name="Mizushima-Sugano J."/>
            <person name="Satoh T."/>
            <person name="Shirai Y."/>
            <person name="Takahashi Y."/>
            <person name="Nakagawa K."/>
            <person name="Okumura K."/>
            <person name="Nagase T."/>
            <person name="Nomura N."/>
            <person name="Kikuchi H."/>
            <person name="Masuho Y."/>
            <person name="Yamashita R."/>
            <person name="Nakai K."/>
            <person name="Yada T."/>
            <person name="Nakamura Y."/>
            <person name="Ohara O."/>
            <person name="Isogai T."/>
            <person name="Sugano S."/>
        </authorList>
    </citation>
    <scope>NUCLEOTIDE SEQUENCE [LARGE SCALE MRNA]</scope>
</reference>
<reference key="8">
    <citation type="submission" date="2005-07" db="EMBL/GenBank/DDBJ databases">
        <authorList>
            <person name="Mural R.J."/>
            <person name="Istrail S."/>
            <person name="Sutton G.G."/>
            <person name="Florea L."/>
            <person name="Halpern A.L."/>
            <person name="Mobarry C.M."/>
            <person name="Lippert R."/>
            <person name="Walenz B."/>
            <person name="Shatkay H."/>
            <person name="Dew I."/>
            <person name="Miller J.R."/>
            <person name="Flanigan M.J."/>
            <person name="Edwards N.J."/>
            <person name="Bolanos R."/>
            <person name="Fasulo D."/>
            <person name="Halldorsson B.V."/>
            <person name="Hannenhalli S."/>
            <person name="Turner R."/>
            <person name="Yooseph S."/>
            <person name="Lu F."/>
            <person name="Nusskern D.R."/>
            <person name="Shue B.C."/>
            <person name="Zheng X.H."/>
            <person name="Zhong F."/>
            <person name="Delcher A.L."/>
            <person name="Huson D.H."/>
            <person name="Kravitz S.A."/>
            <person name="Mouchard L."/>
            <person name="Reinert K."/>
            <person name="Remington K.A."/>
            <person name="Clark A.G."/>
            <person name="Waterman M.S."/>
            <person name="Eichler E.E."/>
            <person name="Adams M.D."/>
            <person name="Hunkapiller M.W."/>
            <person name="Myers E.W."/>
            <person name="Venter J.C."/>
        </authorList>
    </citation>
    <scope>NUCLEOTIDE SEQUENCE [LARGE SCALE GENOMIC DNA]</scope>
</reference>
<reference key="9">
    <citation type="journal article" date="2004" name="Genome Res.">
        <title>The status, quality, and expansion of the NIH full-length cDNA project: the Mammalian Gene Collection (MGC).</title>
        <authorList>
            <consortium name="The MGC Project Team"/>
        </authorList>
    </citation>
    <scope>NUCLEOTIDE SEQUENCE [LARGE SCALE MRNA]</scope>
    <source>
        <tissue>Ovary</tissue>
    </source>
</reference>
<reference key="10">
    <citation type="journal article" date="1999" name="EMBO J.">
        <title>Got1p and Sft2p: membrane proteins involved in traffic to the Golgi complex.</title>
        <authorList>
            <person name="Conchon S."/>
            <person name="Cao X."/>
            <person name="Barlowe C."/>
            <person name="Pelham H.R."/>
        </authorList>
    </citation>
    <scope>PUTATIVE FUNCTION</scope>
    <scope>SUBCELLULAR LOCATION</scope>
    <scope>TOPOLOGY</scope>
</reference>
<reference key="11">
    <citation type="journal article" date="2002" name="Cancer Res.">
        <title>Genomic and expression analysis of the 12p11-p12 amplicon using EST arrays identifies two novel amplified and overexpressed genes.</title>
        <authorList>
            <person name="Bourdon V."/>
            <person name="Naef F."/>
            <person name="Rao P.H."/>
            <person name="Reuter V."/>
            <person name="Mok S.C."/>
            <person name="Bosl G.J."/>
            <person name="Koul S."/>
            <person name="Murty V.V."/>
            <person name="Kucherlapati R.S."/>
            <person name="Chaganti R.S."/>
        </authorList>
    </citation>
    <scope>TISSUE SPECIFICITY</scope>
</reference>
<reference key="12">
    <citation type="journal article" date="2012" name="Mol. Cell. Proteomics">
        <title>Comparative large-scale characterisation of plant vs. mammal proteins reveals similar and idiosyncratic N-alpha acetylation features.</title>
        <authorList>
            <person name="Bienvenut W.V."/>
            <person name="Sumpton D."/>
            <person name="Martinez A."/>
            <person name="Lilla S."/>
            <person name="Espagne C."/>
            <person name="Meinnel T."/>
            <person name="Giglione C."/>
        </authorList>
    </citation>
    <scope>ACETYLATION [LARGE SCALE ANALYSIS] AT MET-1</scope>
    <scope>IDENTIFICATION BY MASS SPECTROMETRY [LARGE SCALE ANALYSIS]</scope>
</reference>
<reference key="13">
    <citation type="journal article" date="2015" name="Proteomics">
        <title>N-terminome analysis of the human mitochondrial proteome.</title>
        <authorList>
            <person name="Vaca Jacome A.S."/>
            <person name="Rabilloud T."/>
            <person name="Schaeffer-Reiss C."/>
            <person name="Rompais M."/>
            <person name="Ayoub D."/>
            <person name="Lane L."/>
            <person name="Bairoch A."/>
            <person name="Van Dorsselaer A."/>
            <person name="Carapito C."/>
        </authorList>
    </citation>
    <scope>IDENTIFICATION BY MASS SPECTROMETRY [LARGE SCALE ANALYSIS]</scope>
</reference>
<feature type="chain" id="PRO_0000218582" description="Vesicle transport protein GOT1B">
    <location>
        <begin position="1"/>
        <end position="138"/>
    </location>
</feature>
<feature type="topological domain" description="Cytoplasmic" evidence="1">
    <location>
        <begin position="1"/>
        <end position="9"/>
    </location>
</feature>
<feature type="transmembrane region" description="Helical; Name=1" evidence="1">
    <location>
        <begin position="10"/>
        <end position="30"/>
    </location>
</feature>
<feature type="topological domain" description="Lumenal" evidence="1">
    <location>
        <begin position="31"/>
        <end position="32"/>
    </location>
</feature>
<feature type="transmembrane region" description="Helical; Name=2" evidence="1">
    <location>
        <begin position="33"/>
        <end position="53"/>
    </location>
</feature>
<feature type="topological domain" description="Cytoplasmic" evidence="1">
    <location>
        <begin position="54"/>
        <end position="68"/>
    </location>
</feature>
<feature type="transmembrane region" description="Helical; Name=3" evidence="1">
    <location>
        <begin position="69"/>
        <end position="89"/>
    </location>
</feature>
<feature type="topological domain" description="Lumenal" evidence="1">
    <location>
        <position position="90"/>
    </location>
</feature>
<feature type="transmembrane region" description="Helical; Name=4" evidence="1">
    <location>
        <begin position="91"/>
        <end position="109"/>
    </location>
</feature>
<feature type="topological domain" description="Cytoplasmic" evidence="1">
    <location>
        <begin position="110"/>
        <end position="138"/>
    </location>
</feature>
<feature type="modified residue" description="N-acetylmethionine" evidence="5">
    <location>
        <position position="1"/>
    </location>
</feature>
<feature type="sequence conflict" description="In Ref. 5; AAF65181." evidence="4" ref="5">
    <original>I</original>
    <variation>T</variation>
    <location>
        <position position="37"/>
    </location>
</feature>
<feature type="sequence conflict" description="In Ref. 6; CAG33670." evidence="4" ref="6">
    <original>R</original>
    <variation>K</variation>
    <location>
        <position position="54"/>
    </location>
</feature>
<keyword id="KW-0007">Acetylation</keyword>
<keyword id="KW-0333">Golgi apparatus</keyword>
<keyword id="KW-0472">Membrane</keyword>
<keyword id="KW-0653">Protein transport</keyword>
<keyword id="KW-1267">Proteomics identification</keyword>
<keyword id="KW-1185">Reference proteome</keyword>
<keyword id="KW-0812">Transmembrane</keyword>
<keyword id="KW-1133">Transmembrane helix</keyword>
<keyword id="KW-0813">Transport</keyword>
<gene>
    <name type="primary">GOLT1B</name>
    <name type="synonym">GCT2</name>
    <name type="synonym">GOT1A</name>
    <name type="ORF">CGI-141</name>
    <name type="ORF">HDCMA39P</name>
    <name type="ORF">UNQ432/PRO793</name>
</gene>